<comment type="function">
    <text evidence="1">Component of the membrane attack complex (MAC), a multiprotein complex activated by the complement cascade, which inserts into a target cell membrane and forms a pore, leading to target cell membrane rupture and cell lysis. The MAC is initiated by proteolytic cleavage of C5 into complement C5b in response to the classical, alternative, lectin and GZMK complement pathways. The complement pathways consist in a cascade of proteins that leads to phagocytosis and breakdown of pathogens and signaling that strengthens the adaptive immune system. C7 serves as a membrane anchor. During MAC assembly, associates with C5b and C6 to form the C5b-7 complex, a key lipophilic precursor of the MAC complex, which associates with the outer leaflet and reduces the energy for membrane bending.</text>
</comment>
<comment type="activity regulation">
    <text evidence="1">Membrane attack complex (MAC) assembly is inhibited by CD59, thereby protecting self-cells from damage during complement activation. MAC assembly is also inhibited by clusterin (CLU) chaperones that inhibit polymerization of C9.</text>
</comment>
<comment type="subunit">
    <text evidence="1">Monomer or dimer; as a C5b-7 complex it can also form multimeric rosettes. Component of the membrane attack complex (MAC), composed of complement C5b, C6, C7, C8A, C8B, C8G and multiple copies of the pore-forming subunit C9.</text>
</comment>
<comment type="subcellular location">
    <subcellularLocation>
        <location evidence="1">Secreted</location>
    </subcellularLocation>
    <subcellularLocation>
        <location evidence="1">Target cell membrane</location>
    </subcellularLocation>
    <text evidence="1">Secreted as soluble protein. Inserts into the cell membrane of target cells.</text>
</comment>
<comment type="PTM">
    <text evidence="1">C-, N- and O-glycosylated. O-glycosylated with core 1 or possibly core 8 glycans.</text>
</comment>
<comment type="similarity">
    <text evidence="8">Belongs to the complement C6/C7/C8/C9 family.</text>
</comment>
<proteinExistence type="evidence at transcript level"/>
<sequence length="843" mass="93524">MKVISLFILVGFIGESQIFSSASSPVNCQWDSYTPWSECNGCTKTQTRRRSVAVYGQYGGQPCVGNAFETQSCEPTRGCPTEEGCGERFRCFSGQCISKSLVCNGDSDCDEDSADEDRCEDSERRPSCDIDKPPPNIELTGNGYNELTGQFRNRVINTKSFGGQCRKVFSGDGKRFYRLSGNVLSYTFQVKINNDFNYEFYNSTWSYVKHTSTEHTSSSRKRSFFRSSSSSSRSYTTHTNEIHKGKSYQLLVVENTVEVTQFINNNPEFLQLAEPFWKELSHLPSLYDYSAYRRLIDQYGTHYLQSGSLGGEYRVLFYVDSEKLKQNGFTSVEEKKCKSSGWHFVVKFSSHGCKELENALKAASGTQNNVLRGNPFIRGGGAGFISSLSYLELDNPAGNKRRYSAWAKSVTDLPKVIKQKLTPLYELVKEVPCVSVKKLYLKRALEEYLDEFDPCHCRPCQNGGLATVEGTHCLCHCKPYTFGAACEQGVLVGNQAGGVDGGWSCWSSWSSCVQGKKTRSRECNNPPPSGGGRSCIGETTESTQCEDEELEHLRLLEPHCFPLSLVPTEFCPSPPALKDGFVQDEGTMFPVGKNVVYTCNEGYSLIGNPVARCGEDLQWLVGEMHCQKIACVLPVLMDGIQSHPQKPFYTVGEKVTVSCSGGMSLEGPSAFLCGSSLKWSPEMKNAHCVQKENPLTQAVPKCQRWEKLQNSRCVCKMPYECVPSLDVCARDERSKRILPLTVCKMHVLHCQGRNYTLTGRDSCTLPASAEKACGACPLWGKCDAESSKCVCREASECEEEGFSICVEVNGKEQTMSECEAGSLRCRGQSISVTSIRPCAAETQ</sequence>
<accession>Q5RAD0</accession>
<gene>
    <name type="primary">C7</name>
</gene>
<organism>
    <name type="scientific">Pongo abelii</name>
    <name type="common">Sumatran orangutan</name>
    <name type="synonym">Pongo pygmaeus abelii</name>
    <dbReference type="NCBI Taxonomy" id="9601"/>
    <lineage>
        <taxon>Eukaryota</taxon>
        <taxon>Metazoa</taxon>
        <taxon>Chordata</taxon>
        <taxon>Craniata</taxon>
        <taxon>Vertebrata</taxon>
        <taxon>Euteleostomi</taxon>
        <taxon>Mammalia</taxon>
        <taxon>Eutheria</taxon>
        <taxon>Euarchontoglires</taxon>
        <taxon>Primates</taxon>
        <taxon>Haplorrhini</taxon>
        <taxon>Catarrhini</taxon>
        <taxon>Hominidae</taxon>
        <taxon>Pongo</taxon>
    </lineage>
</organism>
<evidence type="ECO:0000250" key="1">
    <source>
        <dbReference type="UniProtKB" id="P10643"/>
    </source>
</evidence>
<evidence type="ECO:0000255" key="2"/>
<evidence type="ECO:0000255" key="3">
    <source>
        <dbReference type="PROSITE-ProRule" id="PRU00124"/>
    </source>
</evidence>
<evidence type="ECO:0000255" key="4">
    <source>
        <dbReference type="PROSITE-ProRule" id="PRU00210"/>
    </source>
</evidence>
<evidence type="ECO:0000255" key="5">
    <source>
        <dbReference type="PROSITE-ProRule" id="PRU00302"/>
    </source>
</evidence>
<evidence type="ECO:0000255" key="6">
    <source>
        <dbReference type="PROSITE-ProRule" id="PRU00745"/>
    </source>
</evidence>
<evidence type="ECO:0000256" key="7">
    <source>
        <dbReference type="SAM" id="MobiDB-lite"/>
    </source>
</evidence>
<evidence type="ECO:0000305" key="8"/>
<keyword id="KW-0179">Complement alternate pathway</keyword>
<keyword id="KW-0180">Complement pathway</keyword>
<keyword id="KW-0204">Cytolysis</keyword>
<keyword id="KW-1015">Disulfide bond</keyword>
<keyword id="KW-0245">EGF-like domain</keyword>
<keyword id="KW-0325">Glycoprotein</keyword>
<keyword id="KW-0391">Immunity</keyword>
<keyword id="KW-0399">Innate immunity</keyword>
<keyword id="KW-0472">Membrane</keyword>
<keyword id="KW-0473">Membrane attack complex</keyword>
<keyword id="KW-1185">Reference proteome</keyword>
<keyword id="KW-0677">Repeat</keyword>
<keyword id="KW-0964">Secreted</keyword>
<keyword id="KW-0732">Signal</keyword>
<keyword id="KW-0768">Sushi</keyword>
<keyword id="KW-1052">Target cell membrane</keyword>
<keyword id="KW-1053">Target membrane</keyword>
<name>CO7_PONAB</name>
<reference key="1">
    <citation type="submission" date="2004-11" db="EMBL/GenBank/DDBJ databases">
        <authorList>
            <consortium name="The German cDNA consortium"/>
        </authorList>
    </citation>
    <scope>NUCLEOTIDE SEQUENCE [LARGE SCALE MRNA]</scope>
    <source>
        <tissue>Kidney</tissue>
    </source>
</reference>
<dbReference type="EMBL" id="CR859088">
    <property type="protein sequence ID" value="CAH91280.1"/>
    <property type="molecule type" value="mRNA"/>
</dbReference>
<dbReference type="RefSeq" id="NP_001125756.1">
    <property type="nucleotide sequence ID" value="NM_001132284.1"/>
</dbReference>
<dbReference type="BMRB" id="Q5RAD0"/>
<dbReference type="SMR" id="Q5RAD0"/>
<dbReference type="FunCoup" id="Q5RAD0">
    <property type="interactions" value="106"/>
</dbReference>
<dbReference type="STRING" id="9601.ENSPPYP00000017232"/>
<dbReference type="GlyCosmos" id="Q5RAD0">
    <property type="glycosylation" value="7 sites, No reported glycans"/>
</dbReference>
<dbReference type="GeneID" id="100172681"/>
<dbReference type="KEGG" id="pon:100172681"/>
<dbReference type="CTD" id="730"/>
<dbReference type="eggNOG" id="ENOG502QU3G">
    <property type="taxonomic scope" value="Eukaryota"/>
</dbReference>
<dbReference type="InParanoid" id="Q5RAD0"/>
<dbReference type="OrthoDB" id="504708at2759"/>
<dbReference type="Proteomes" id="UP000001595">
    <property type="component" value="Unplaced"/>
</dbReference>
<dbReference type="GO" id="GO:0005576">
    <property type="term" value="C:extracellular region"/>
    <property type="evidence" value="ECO:0007669"/>
    <property type="project" value="UniProtKB-SubCell"/>
</dbReference>
<dbReference type="GO" id="GO:0005579">
    <property type="term" value="C:membrane attack complex"/>
    <property type="evidence" value="ECO:0007669"/>
    <property type="project" value="UniProtKB-KW"/>
</dbReference>
<dbReference type="GO" id="GO:0006957">
    <property type="term" value="P:complement activation, alternative pathway"/>
    <property type="evidence" value="ECO:0007669"/>
    <property type="project" value="UniProtKB-KW"/>
</dbReference>
<dbReference type="GO" id="GO:0006958">
    <property type="term" value="P:complement activation, classical pathway"/>
    <property type="evidence" value="ECO:0007669"/>
    <property type="project" value="UniProtKB-KW"/>
</dbReference>
<dbReference type="GO" id="GO:0031640">
    <property type="term" value="P:killing of cells of another organism"/>
    <property type="evidence" value="ECO:0007669"/>
    <property type="project" value="UniProtKB-KW"/>
</dbReference>
<dbReference type="CDD" id="cd00033">
    <property type="entry name" value="CCP"/>
    <property type="match status" value="2"/>
</dbReference>
<dbReference type="CDD" id="cd00112">
    <property type="entry name" value="LDLa"/>
    <property type="match status" value="1"/>
</dbReference>
<dbReference type="FunFam" id="2.10.70.10:FF:000075">
    <property type="entry name" value="Complement component C7"/>
    <property type="match status" value="1"/>
</dbReference>
<dbReference type="FunFam" id="2.10.70.10:FF:000077">
    <property type="entry name" value="Complement component C7"/>
    <property type="match status" value="1"/>
</dbReference>
<dbReference type="FunFam" id="3.30.60.30:FF:000053">
    <property type="entry name" value="Complement component C7"/>
    <property type="match status" value="1"/>
</dbReference>
<dbReference type="FunFam" id="3.30.60.30:FF:000095">
    <property type="entry name" value="Complement component C7"/>
    <property type="match status" value="1"/>
</dbReference>
<dbReference type="FunFam" id="4.10.400.10:FF:000099">
    <property type="entry name" value="Complement component C7"/>
    <property type="match status" value="1"/>
</dbReference>
<dbReference type="FunFam" id="2.20.100.10:FF:000002">
    <property type="entry name" value="Unc-5 netrin receptor C"/>
    <property type="match status" value="1"/>
</dbReference>
<dbReference type="Gene3D" id="3.30.60.30">
    <property type="match status" value="2"/>
</dbReference>
<dbReference type="Gene3D" id="2.10.70.10">
    <property type="entry name" value="Complement Module, domain 1"/>
    <property type="match status" value="2"/>
</dbReference>
<dbReference type="Gene3D" id="4.10.400.10">
    <property type="entry name" value="Low-density Lipoprotein Receptor"/>
    <property type="match status" value="1"/>
</dbReference>
<dbReference type="Gene3D" id="2.20.100.10">
    <property type="entry name" value="Thrombospondin type-1 (TSP1) repeat"/>
    <property type="match status" value="2"/>
</dbReference>
<dbReference type="InterPro" id="IPR048827">
    <property type="entry name" value="C7_FIM2_N"/>
</dbReference>
<dbReference type="InterPro" id="IPR048825">
    <property type="entry name" value="C7_KAZAL"/>
</dbReference>
<dbReference type="InterPro" id="IPR003884">
    <property type="entry name" value="FacI_MAC"/>
</dbReference>
<dbReference type="InterPro" id="IPR040729">
    <property type="entry name" value="Kazal_3"/>
</dbReference>
<dbReference type="InterPro" id="IPR036055">
    <property type="entry name" value="LDL_receptor-like_sf"/>
</dbReference>
<dbReference type="InterPro" id="IPR023415">
    <property type="entry name" value="LDLR_class-A_CS"/>
</dbReference>
<dbReference type="InterPro" id="IPR002172">
    <property type="entry name" value="LDrepeatLR_classA_rpt"/>
</dbReference>
<dbReference type="InterPro" id="IPR001862">
    <property type="entry name" value="MAC_perforin"/>
</dbReference>
<dbReference type="InterPro" id="IPR020864">
    <property type="entry name" value="MACPF"/>
</dbReference>
<dbReference type="InterPro" id="IPR020863">
    <property type="entry name" value="MACPF_CS"/>
</dbReference>
<dbReference type="InterPro" id="IPR035976">
    <property type="entry name" value="Sushi/SCR/CCP_sf"/>
</dbReference>
<dbReference type="InterPro" id="IPR000436">
    <property type="entry name" value="Sushi_SCR_CCP_dom"/>
</dbReference>
<dbReference type="InterPro" id="IPR000884">
    <property type="entry name" value="TSP1_rpt"/>
</dbReference>
<dbReference type="InterPro" id="IPR036383">
    <property type="entry name" value="TSP1_rpt_sf"/>
</dbReference>
<dbReference type="PANTHER" id="PTHR45742">
    <property type="entry name" value="COMPLEMENT COMPONENT C6"/>
    <property type="match status" value="1"/>
</dbReference>
<dbReference type="PANTHER" id="PTHR45742:SF2">
    <property type="entry name" value="COMPLEMENT COMPONENT C7"/>
    <property type="match status" value="1"/>
</dbReference>
<dbReference type="Pfam" id="PF21284">
    <property type="entry name" value="C7_FIM2_N"/>
    <property type="match status" value="1"/>
</dbReference>
<dbReference type="Pfam" id="PF18434">
    <property type="entry name" value="Kazal_3"/>
    <property type="match status" value="1"/>
</dbReference>
<dbReference type="Pfam" id="PF21330">
    <property type="entry name" value="Kazal_C7"/>
    <property type="match status" value="1"/>
</dbReference>
<dbReference type="Pfam" id="PF00057">
    <property type="entry name" value="Ldl_recept_a"/>
    <property type="match status" value="1"/>
</dbReference>
<dbReference type="Pfam" id="PF01823">
    <property type="entry name" value="MACPF"/>
    <property type="match status" value="1"/>
</dbReference>
<dbReference type="Pfam" id="PF00084">
    <property type="entry name" value="Sushi"/>
    <property type="match status" value="2"/>
</dbReference>
<dbReference type="Pfam" id="PF00090">
    <property type="entry name" value="TSP_1"/>
    <property type="match status" value="2"/>
</dbReference>
<dbReference type="PRINTS" id="PR00764">
    <property type="entry name" value="COMPLEMENTC9"/>
</dbReference>
<dbReference type="PRINTS" id="PR01705">
    <property type="entry name" value="TSP1REPEAT"/>
</dbReference>
<dbReference type="SMART" id="SM00032">
    <property type="entry name" value="CCP"/>
    <property type="match status" value="2"/>
</dbReference>
<dbReference type="SMART" id="SM00057">
    <property type="entry name" value="FIMAC"/>
    <property type="match status" value="2"/>
</dbReference>
<dbReference type="SMART" id="SM00192">
    <property type="entry name" value="LDLa"/>
    <property type="match status" value="1"/>
</dbReference>
<dbReference type="SMART" id="SM00457">
    <property type="entry name" value="MACPF"/>
    <property type="match status" value="1"/>
</dbReference>
<dbReference type="SMART" id="SM00209">
    <property type="entry name" value="TSP1"/>
    <property type="match status" value="2"/>
</dbReference>
<dbReference type="SUPFAM" id="SSF57535">
    <property type="entry name" value="Complement control module/SCR domain"/>
    <property type="match status" value="2"/>
</dbReference>
<dbReference type="SUPFAM" id="SSF82895">
    <property type="entry name" value="TSP-1 type 1 repeat"/>
    <property type="match status" value="2"/>
</dbReference>
<dbReference type="PROSITE" id="PS00022">
    <property type="entry name" value="EGF_1"/>
    <property type="match status" value="1"/>
</dbReference>
<dbReference type="PROSITE" id="PS01186">
    <property type="entry name" value="EGF_2"/>
    <property type="match status" value="1"/>
</dbReference>
<dbReference type="PROSITE" id="PS01209">
    <property type="entry name" value="LDLRA_1"/>
    <property type="match status" value="1"/>
</dbReference>
<dbReference type="PROSITE" id="PS50068">
    <property type="entry name" value="LDLRA_2"/>
    <property type="match status" value="1"/>
</dbReference>
<dbReference type="PROSITE" id="PS00279">
    <property type="entry name" value="MACPF_1"/>
    <property type="match status" value="1"/>
</dbReference>
<dbReference type="PROSITE" id="PS51412">
    <property type="entry name" value="MACPF_2"/>
    <property type="match status" value="1"/>
</dbReference>
<dbReference type="PROSITE" id="PS50923">
    <property type="entry name" value="SUSHI"/>
    <property type="match status" value="2"/>
</dbReference>
<dbReference type="PROSITE" id="PS50092">
    <property type="entry name" value="TSP1"/>
    <property type="match status" value="2"/>
</dbReference>
<feature type="signal peptide" evidence="1">
    <location>
        <begin position="1"/>
        <end position="22"/>
    </location>
</feature>
<feature type="chain" id="PRO_0000045782" description="Complement component C7">
    <location>
        <begin position="23"/>
        <end position="843"/>
    </location>
</feature>
<feature type="domain" description="TSP type-1 1" evidence="4">
    <location>
        <begin position="27"/>
        <end position="80"/>
    </location>
</feature>
<feature type="domain" description="LDL-receptor class A" evidence="3">
    <location>
        <begin position="83"/>
        <end position="121"/>
    </location>
</feature>
<feature type="domain" description="MACPF" evidence="6">
    <location>
        <begin position="124"/>
        <end position="456"/>
    </location>
</feature>
<feature type="domain" description="EGF-like">
    <location>
        <begin position="457"/>
        <end position="487"/>
    </location>
</feature>
<feature type="domain" description="TSP type-1 2" evidence="4">
    <location>
        <begin position="500"/>
        <end position="549"/>
    </location>
</feature>
<feature type="domain" description="Sushi 1" evidence="5">
    <location>
        <begin position="569"/>
        <end position="628"/>
    </location>
</feature>
<feature type="domain" description="Sushi 2" evidence="5">
    <location>
        <begin position="629"/>
        <end position="690"/>
    </location>
</feature>
<feature type="region of interest" description="Disordered" evidence="7">
    <location>
        <begin position="106"/>
        <end position="143"/>
    </location>
</feature>
<feature type="region of interest" description="Disordered" evidence="7">
    <location>
        <begin position="518"/>
        <end position="537"/>
    </location>
</feature>
<feature type="region of interest" description="CCP 1">
    <location>
        <begin position="545"/>
        <end position="615"/>
    </location>
</feature>
<feature type="region of interest" description="CCP 2">
    <location>
        <begin position="616"/>
        <end position="693"/>
    </location>
</feature>
<feature type="region of interest" description="Factor I module (FIM) 1">
    <location>
        <begin position="695"/>
        <end position="770"/>
    </location>
</feature>
<feature type="region of interest" description="Factor I module (FIM) 2">
    <location>
        <begin position="771"/>
        <end position="843"/>
    </location>
</feature>
<feature type="compositionally biased region" description="Acidic residues" evidence="7">
    <location>
        <begin position="107"/>
        <end position="120"/>
    </location>
</feature>
<feature type="compositionally biased region" description="Basic and acidic residues" evidence="7">
    <location>
        <begin position="121"/>
        <end position="132"/>
    </location>
</feature>
<feature type="glycosylation site" description="C-linked (Man) tryptophan" evidence="1">
    <location>
        <position position="36"/>
    </location>
</feature>
<feature type="glycosylation site" description="N-linked (GlcNAc...) asparagine" evidence="2">
    <location>
        <position position="202"/>
    </location>
</feature>
<feature type="glycosylation site" description="C-linked (Man) tryptophan" evidence="1">
    <location>
        <position position="503"/>
    </location>
</feature>
<feature type="glycosylation site" description="C-linked (Man) tryptophan" evidence="1">
    <location>
        <position position="506"/>
    </location>
</feature>
<feature type="glycosylation site" description="C-linked (Man) tryptophan" evidence="1">
    <location>
        <position position="509"/>
    </location>
</feature>
<feature type="glycosylation site" description="O-linked (GalNAc...) threonine" evidence="1">
    <location>
        <position position="696"/>
    </location>
</feature>
<feature type="glycosylation site" description="N-linked (GlcNAc...) asparagine" evidence="2">
    <location>
        <position position="754"/>
    </location>
</feature>
<feature type="disulfide bond" evidence="1">
    <location>
        <begin position="28"/>
        <end position="63"/>
    </location>
</feature>
<feature type="disulfide bond" evidence="1">
    <location>
        <begin position="39"/>
        <end position="73"/>
    </location>
</feature>
<feature type="disulfide bond" evidence="1">
    <location>
        <begin position="42"/>
        <end position="79"/>
    </location>
</feature>
<feature type="disulfide bond" evidence="1">
    <location>
        <begin position="85"/>
        <end position="96"/>
    </location>
</feature>
<feature type="disulfide bond" evidence="1">
    <location>
        <begin position="91"/>
        <end position="109"/>
    </location>
</feature>
<feature type="disulfide bond" evidence="1">
    <location>
        <begin position="103"/>
        <end position="119"/>
    </location>
</feature>
<feature type="disulfide bond" evidence="1">
    <location>
        <begin position="128"/>
        <end position="165"/>
    </location>
</feature>
<feature type="disulfide bond" evidence="1">
    <location>
        <begin position="337"/>
        <end position="353"/>
    </location>
</feature>
<feature type="disulfide bond" evidence="1">
    <location>
        <begin position="433"/>
        <end position="560"/>
    </location>
</feature>
<feature type="disulfide bond" evidence="1">
    <location>
        <begin position="455"/>
        <end position="505"/>
    </location>
</feature>
<feature type="disulfide bond" evidence="1">
    <location>
        <begin position="457"/>
        <end position="473"/>
    </location>
</feature>
<feature type="disulfide bond" evidence="1">
    <location>
        <begin position="460"/>
        <end position="475"/>
    </location>
</feature>
<feature type="disulfide bond" evidence="1">
    <location>
        <begin position="477"/>
        <end position="486"/>
    </location>
</feature>
<feature type="disulfide bond" evidence="1">
    <location>
        <begin position="512"/>
        <end position="545"/>
    </location>
</feature>
<feature type="disulfide bond" evidence="1">
    <location>
        <begin position="523"/>
        <end position="535"/>
    </location>
</feature>
<feature type="disulfide bond" evidence="1">
    <location>
        <begin position="571"/>
        <end position="613"/>
    </location>
</feature>
<feature type="disulfide bond" evidence="1">
    <location>
        <begin position="599"/>
        <end position="626"/>
    </location>
</feature>
<feature type="disulfide bond" evidence="1">
    <location>
        <begin position="631"/>
        <end position="673"/>
    </location>
</feature>
<feature type="disulfide bond" evidence="1">
    <location>
        <begin position="659"/>
        <end position="688"/>
    </location>
</feature>
<feature type="disulfide bond" evidence="1">
    <location>
        <begin position="702"/>
        <end position="713"/>
    </location>
</feature>
<feature type="disulfide bond" evidence="1">
    <location>
        <begin position="715"/>
        <end position="750"/>
    </location>
</feature>
<feature type="disulfide bond" evidence="1">
    <location>
        <begin position="721"/>
        <end position="743"/>
    </location>
</feature>
<feature type="disulfide bond" evidence="1">
    <location>
        <begin position="728"/>
        <end position="763"/>
    </location>
</feature>
<feature type="disulfide bond" evidence="1">
    <location>
        <begin position="773"/>
        <end position="782"/>
    </location>
</feature>
<feature type="disulfide bond" evidence="1">
    <location>
        <begin position="776"/>
        <end position="789"/>
    </location>
</feature>
<feature type="disulfide bond" evidence="1">
    <location>
        <begin position="791"/>
        <end position="825"/>
    </location>
</feature>
<feature type="disulfide bond" evidence="1">
    <location>
        <begin position="797"/>
        <end position="818"/>
    </location>
</feature>
<feature type="disulfide bond" evidence="1">
    <location>
        <begin position="805"/>
        <end position="838"/>
    </location>
</feature>
<protein>
    <recommendedName>
        <fullName>Complement component C7</fullName>
    </recommendedName>
</protein>